<protein>
    <recommendedName>
        <fullName>NADH dehydrogenase [ubiquinone] 1 beta subcomplex subunit 6</fullName>
    </recommendedName>
    <alternativeName>
        <fullName>Complex I-B17</fullName>
        <shortName>CI-B17</shortName>
    </alternativeName>
    <alternativeName>
        <fullName>NADH-ubiquinone oxidoreductase B17 subunit</fullName>
    </alternativeName>
</protein>
<keyword id="KW-0007">Acetylation</keyword>
<keyword id="KW-0249">Electron transport</keyword>
<keyword id="KW-0472">Membrane</keyword>
<keyword id="KW-0496">Mitochondrion</keyword>
<keyword id="KW-0999">Mitochondrion inner membrane</keyword>
<keyword id="KW-1185">Reference proteome</keyword>
<keyword id="KW-0679">Respiratory chain</keyword>
<keyword id="KW-0812">Transmembrane</keyword>
<keyword id="KW-1133">Transmembrane helix</keyword>
<keyword id="KW-0813">Transport</keyword>
<gene>
    <name type="primary">NDUFB6</name>
</gene>
<proteinExistence type="evidence at transcript level"/>
<organism>
    <name type="scientific">Pongo abelii</name>
    <name type="common">Sumatran orangutan</name>
    <name type="synonym">Pongo pygmaeus abelii</name>
    <dbReference type="NCBI Taxonomy" id="9601"/>
    <lineage>
        <taxon>Eukaryota</taxon>
        <taxon>Metazoa</taxon>
        <taxon>Chordata</taxon>
        <taxon>Craniata</taxon>
        <taxon>Vertebrata</taxon>
        <taxon>Euteleostomi</taxon>
        <taxon>Mammalia</taxon>
        <taxon>Eutheria</taxon>
        <taxon>Euarchontoglires</taxon>
        <taxon>Primates</taxon>
        <taxon>Haplorrhini</taxon>
        <taxon>Catarrhini</taxon>
        <taxon>Hominidae</taxon>
        <taxon>Pongo</taxon>
    </lineage>
</organism>
<feature type="initiator methionine" description="Removed" evidence="1">
    <location>
        <position position="1"/>
    </location>
</feature>
<feature type="chain" id="PRO_0000118809" description="NADH dehydrogenase [ubiquinone] 1 beta subcomplex subunit 6">
    <location>
        <begin position="2"/>
        <end position="128"/>
    </location>
</feature>
<feature type="transmembrane region" description="Helical" evidence="3">
    <location>
        <begin position="68"/>
        <end position="86"/>
    </location>
</feature>
<feature type="modified residue" description="N-acetylthreonine" evidence="1">
    <location>
        <position position="2"/>
    </location>
</feature>
<feature type="modified residue" description="N6-acetyllysine" evidence="2">
    <location>
        <position position="24"/>
    </location>
</feature>
<name>NDUB6_PONAB</name>
<dbReference type="EMBL" id="CR858528">
    <property type="protein sequence ID" value="CAH90755.1"/>
    <property type="molecule type" value="mRNA"/>
</dbReference>
<dbReference type="RefSeq" id="NP_001125422.1">
    <property type="nucleotide sequence ID" value="NM_001131950.2"/>
</dbReference>
<dbReference type="SMR" id="P0CB93"/>
<dbReference type="FunCoup" id="P0CB93">
    <property type="interactions" value="1014"/>
</dbReference>
<dbReference type="STRING" id="9601.ENSPPYP00000021452"/>
<dbReference type="GeneID" id="100172329"/>
<dbReference type="KEGG" id="pon:100172329"/>
<dbReference type="CTD" id="4712"/>
<dbReference type="eggNOG" id="KOG4633">
    <property type="taxonomic scope" value="Eukaryota"/>
</dbReference>
<dbReference type="InParanoid" id="P0CB93"/>
<dbReference type="OrthoDB" id="5824032at2759"/>
<dbReference type="Proteomes" id="UP000001595">
    <property type="component" value="Unplaced"/>
</dbReference>
<dbReference type="GO" id="GO:0005743">
    <property type="term" value="C:mitochondrial inner membrane"/>
    <property type="evidence" value="ECO:0007669"/>
    <property type="project" value="UniProtKB-SubCell"/>
</dbReference>
<dbReference type="GO" id="GO:0045271">
    <property type="term" value="C:respiratory chain complex I"/>
    <property type="evidence" value="ECO:0000250"/>
    <property type="project" value="UniProtKB"/>
</dbReference>
<dbReference type="GO" id="GO:0006120">
    <property type="term" value="P:mitochondrial electron transport, NADH to ubiquinone"/>
    <property type="evidence" value="ECO:0007669"/>
    <property type="project" value="InterPro"/>
</dbReference>
<dbReference type="InterPro" id="IPR019174">
    <property type="entry name" value="NADH_DH_b-subcmplx_su6"/>
</dbReference>
<dbReference type="PANTHER" id="PTHR15083">
    <property type="entry name" value="NADH DEHYDROGENASE [UBIQUINONE] 1 BETA SUBCOMPLEX SUBUNIT 6"/>
    <property type="match status" value="1"/>
</dbReference>
<dbReference type="PANTHER" id="PTHR15083:SF0">
    <property type="entry name" value="NADH DEHYDROGENASE [UBIQUINONE] 1 BETA SUBCOMPLEX SUBUNIT 6"/>
    <property type="match status" value="1"/>
</dbReference>
<dbReference type="Pfam" id="PF09782">
    <property type="entry name" value="NDUF_B6"/>
    <property type="match status" value="1"/>
</dbReference>
<accession>P0CB93</accession>
<accession>Q0MQD9</accession>
<accession>Q5RBV5</accession>
<reference key="1">
    <citation type="submission" date="2004-11" db="EMBL/GenBank/DDBJ databases">
        <authorList>
            <consortium name="The German cDNA consortium"/>
        </authorList>
    </citation>
    <scope>NUCLEOTIDE SEQUENCE [LARGE SCALE MRNA]</scope>
    <source>
        <tissue>Heart</tissue>
    </source>
</reference>
<sequence length="128" mass="15551">MTEYTPDEKLRLHQLRKLRRRWLKDQELSHREPVLPPQKMGPMEKFWNTFLENKSPWRKMVHGVYQKSIFVFTHILVPAWIIHYYMKYHVSEKPYGIVETKPRIFPGDTILETGEVIPPMKEFPDQHH</sequence>
<evidence type="ECO:0000250" key="1">
    <source>
        <dbReference type="UniProtKB" id="O95139"/>
    </source>
</evidence>
<evidence type="ECO:0000250" key="2">
    <source>
        <dbReference type="UniProtKB" id="Q3UIU2"/>
    </source>
</evidence>
<evidence type="ECO:0000255" key="3"/>
<evidence type="ECO:0000305" key="4"/>
<comment type="function">
    <text evidence="1">Accessory subunit of the mitochondrial membrane respiratory chain NADH dehydrogenase (Complex I), that is believed not to be involved in catalysis. Complex I functions in the transfer of electrons from NADH to the respiratory chain. The immediate electron acceptor for the enzyme is believed to be ubiquinone.</text>
</comment>
<comment type="subunit">
    <text evidence="1">Complex I is composed of 45 different subunits.</text>
</comment>
<comment type="subcellular location">
    <subcellularLocation>
        <location evidence="1">Mitochondrion inner membrane</location>
        <topology evidence="3">Single-pass membrane protein</topology>
        <orientation evidence="1">Matrix side</orientation>
    </subcellularLocation>
</comment>
<comment type="similarity">
    <text evidence="4">Belongs to the complex I NDUFB6 subunit family.</text>
</comment>